<evidence type="ECO:0000269" key="1">
    <source>
    </source>
</evidence>
<evidence type="ECO:0000305" key="2"/>
<protein>
    <recommendedName>
        <fullName>Thiosulfate-binding protein</fullName>
    </recommendedName>
</protein>
<keyword id="KW-0903">Direct protein sequencing</keyword>
<keyword id="KW-0574">Periplasm</keyword>
<keyword id="KW-1185">Reference proteome</keyword>
<keyword id="KW-0732">Signal</keyword>
<keyword id="KW-0764">Sulfate transport</keyword>
<keyword id="KW-0813">Transport</keyword>
<reference key="1">
    <citation type="journal article" date="1990" name="J. Bacteriol.">
        <title>Sulfate and thiosulfate transport in Escherichia coli K-12: identification of a gene encoding a novel protein involved in thiosulfate binding.</title>
        <authorList>
            <person name="Hryniewicz M.M."/>
            <person name="Sirko A."/>
            <person name="Palucha A."/>
            <person name="Boeck A."/>
            <person name="Hulanicka D.M."/>
        </authorList>
    </citation>
    <scope>NUCLEOTIDE SEQUENCE [GENOMIC DNA]</scope>
    <source>
        <strain>K12</strain>
    </source>
</reference>
<reference key="2">
    <citation type="journal article" date="1997" name="DNA Res.">
        <title>Construction of a contiguous 874-kb sequence of the Escherichia coli-K12 genome corresponding to 50.0-68.8 min on the linkage map and analysis of its sequence features.</title>
        <authorList>
            <person name="Yamamoto Y."/>
            <person name="Aiba H."/>
            <person name="Baba T."/>
            <person name="Hayashi K."/>
            <person name="Inada T."/>
            <person name="Isono K."/>
            <person name="Itoh T."/>
            <person name="Kimura S."/>
            <person name="Kitagawa M."/>
            <person name="Makino K."/>
            <person name="Miki T."/>
            <person name="Mitsuhashi N."/>
            <person name="Mizobuchi K."/>
            <person name="Mori H."/>
            <person name="Nakade S."/>
            <person name="Nakamura Y."/>
            <person name="Nashimoto H."/>
            <person name="Oshima T."/>
            <person name="Oyama S."/>
            <person name="Saito N."/>
            <person name="Sampei G."/>
            <person name="Satoh Y."/>
            <person name="Sivasundaram S."/>
            <person name="Tagami H."/>
            <person name="Takahashi H."/>
            <person name="Takeda J."/>
            <person name="Takemoto K."/>
            <person name="Uehara K."/>
            <person name="Wada C."/>
            <person name="Yamagata S."/>
            <person name="Horiuchi T."/>
        </authorList>
    </citation>
    <scope>NUCLEOTIDE SEQUENCE [LARGE SCALE GENOMIC DNA]</scope>
    <source>
        <strain>K12 / W3110 / ATCC 27325 / DSM 5911</strain>
    </source>
</reference>
<reference key="3">
    <citation type="journal article" date="1997" name="Science">
        <title>The complete genome sequence of Escherichia coli K-12.</title>
        <authorList>
            <person name="Blattner F.R."/>
            <person name="Plunkett G. III"/>
            <person name="Bloch C.A."/>
            <person name="Perna N.T."/>
            <person name="Burland V."/>
            <person name="Riley M."/>
            <person name="Collado-Vides J."/>
            <person name="Glasner J.D."/>
            <person name="Rode C.K."/>
            <person name="Mayhew G.F."/>
            <person name="Gregor J."/>
            <person name="Davis N.W."/>
            <person name="Kirkpatrick H.A."/>
            <person name="Goeden M.A."/>
            <person name="Rose D.J."/>
            <person name="Mau B."/>
            <person name="Shao Y."/>
        </authorList>
    </citation>
    <scope>NUCLEOTIDE SEQUENCE [LARGE SCALE GENOMIC DNA]</scope>
    <source>
        <strain>K12 / MG1655 / ATCC 47076</strain>
    </source>
</reference>
<reference key="4">
    <citation type="journal article" date="2006" name="Mol. Syst. Biol.">
        <title>Highly accurate genome sequences of Escherichia coli K-12 strains MG1655 and W3110.</title>
        <authorList>
            <person name="Hayashi K."/>
            <person name="Morooka N."/>
            <person name="Yamamoto Y."/>
            <person name="Fujita K."/>
            <person name="Isono K."/>
            <person name="Choi S."/>
            <person name="Ohtsubo E."/>
            <person name="Baba T."/>
            <person name="Wanner B.L."/>
            <person name="Mori H."/>
            <person name="Horiuchi T."/>
        </authorList>
    </citation>
    <scope>NUCLEOTIDE SEQUENCE [LARGE SCALE GENOMIC DNA]</scope>
    <source>
        <strain>K12 / W3110 / ATCC 27325 / DSM 5911</strain>
    </source>
</reference>
<reference key="5">
    <citation type="journal article" date="1997" name="Electrophoresis">
        <title>Comparing the predicted and observed properties of proteins encoded in the genome of Escherichia coli K-12.</title>
        <authorList>
            <person name="Link A.J."/>
            <person name="Robison K."/>
            <person name="Church G.M."/>
        </authorList>
    </citation>
    <scope>PROTEIN SEQUENCE OF 26-37</scope>
    <source>
        <strain>K12 / EMG2</strain>
    </source>
</reference>
<sequence length="338" mass="37615">MAVNLLKKNSLALVASLLLAGHVQATELLNSSYDVSRELFAALNPPFEQQWAKDNGGDKLTIKQSHAGSSKQALAILQGLKADVVTYNQVTDVQILHDKGKLIPADWQSRLPNNSSPFYSTMGFLVRKGNPKNIHDWNDLVRSDVKLIFPNPKTSGNARYTYLAAWGAADKADGGDKGKTEQFMTQFLKNVEVFDTGGRGATTTFAERGLGDVLISFESEVNNIRKQYEAQGFEVVIPKTNILAEFPVAWVDKNVQANGTEKAAKAYLNWLYSPQAQTIITDYYYRVNNPEVMDKLKDKFPQTELFRVEDKFGSWPEVMKTHFTSGGELDKLLAAGRN</sequence>
<organism>
    <name type="scientific">Escherichia coli (strain K12)</name>
    <dbReference type="NCBI Taxonomy" id="83333"/>
    <lineage>
        <taxon>Bacteria</taxon>
        <taxon>Pseudomonadati</taxon>
        <taxon>Pseudomonadota</taxon>
        <taxon>Gammaproteobacteria</taxon>
        <taxon>Enterobacterales</taxon>
        <taxon>Enterobacteriaceae</taxon>
        <taxon>Escherichia</taxon>
    </lineage>
</organism>
<dbReference type="EMBL" id="M32101">
    <property type="protein sequence ID" value="AAA23636.1"/>
    <property type="molecule type" value="Genomic_DNA"/>
</dbReference>
<dbReference type="EMBL" id="U00096">
    <property type="protein sequence ID" value="AAC75478.1"/>
    <property type="molecule type" value="Genomic_DNA"/>
</dbReference>
<dbReference type="EMBL" id="AP009048">
    <property type="protein sequence ID" value="BAA16299.1"/>
    <property type="molecule type" value="Genomic_DNA"/>
</dbReference>
<dbReference type="PIR" id="A35403">
    <property type="entry name" value="JGECT"/>
</dbReference>
<dbReference type="RefSeq" id="NP_416920.1">
    <property type="nucleotide sequence ID" value="NC_000913.3"/>
</dbReference>
<dbReference type="RefSeq" id="WP_000290230.1">
    <property type="nucleotide sequence ID" value="NZ_LN832404.1"/>
</dbReference>
<dbReference type="SMR" id="P16700"/>
<dbReference type="BioGRID" id="4263209">
    <property type="interactions" value="28"/>
</dbReference>
<dbReference type="ComplexPortal" id="CPX-4385">
    <property type="entry name" value="Sulfate/thiosulfate ABC transporter complex, cypP variant"/>
</dbReference>
<dbReference type="DIP" id="DIP-9384N"/>
<dbReference type="FunCoup" id="P16700">
    <property type="interactions" value="217"/>
</dbReference>
<dbReference type="IntAct" id="P16700">
    <property type="interactions" value="6"/>
</dbReference>
<dbReference type="STRING" id="511145.b2425"/>
<dbReference type="TCDB" id="3.A.1.6.1">
    <property type="family name" value="the atp-binding cassette (abc) superfamily"/>
</dbReference>
<dbReference type="jPOST" id="P16700"/>
<dbReference type="PaxDb" id="511145-b2425"/>
<dbReference type="EnsemblBacteria" id="AAC75478">
    <property type="protein sequence ID" value="AAC75478"/>
    <property type="gene ID" value="b2425"/>
</dbReference>
<dbReference type="GeneID" id="946883"/>
<dbReference type="KEGG" id="ecj:JW2418"/>
<dbReference type="KEGG" id="eco:b2425"/>
<dbReference type="KEGG" id="ecoc:C3026_13475"/>
<dbReference type="PATRIC" id="fig|1411691.4.peg.4306"/>
<dbReference type="EchoBASE" id="EB0192"/>
<dbReference type="eggNOG" id="COG4150">
    <property type="taxonomic scope" value="Bacteria"/>
</dbReference>
<dbReference type="HOGENOM" id="CLU_055615_0_1_6"/>
<dbReference type="InParanoid" id="P16700"/>
<dbReference type="OMA" id="TMNMATD"/>
<dbReference type="OrthoDB" id="9802127at2"/>
<dbReference type="PhylomeDB" id="P16700"/>
<dbReference type="BioCyc" id="EcoCyc:CYSP-MONOMER"/>
<dbReference type="BioCyc" id="MetaCyc:CYSP-MONOMER"/>
<dbReference type="PRO" id="PR:P16700"/>
<dbReference type="Proteomes" id="UP000000625">
    <property type="component" value="Chromosome"/>
</dbReference>
<dbReference type="GO" id="GO:0035796">
    <property type="term" value="C:ATP-binding cassette (ABC) transporter complex, transmembrane substrate-binding subunit-containing"/>
    <property type="evidence" value="ECO:0000303"/>
    <property type="project" value="ComplexPortal"/>
</dbReference>
<dbReference type="GO" id="GO:0005615">
    <property type="term" value="C:extracellular space"/>
    <property type="evidence" value="ECO:0000318"/>
    <property type="project" value="GO_Central"/>
</dbReference>
<dbReference type="GO" id="GO:0016020">
    <property type="term" value="C:membrane"/>
    <property type="evidence" value="ECO:0000303"/>
    <property type="project" value="ComplexPortal"/>
</dbReference>
<dbReference type="GO" id="GO:0030288">
    <property type="term" value="C:outer membrane-bounded periplasmic space"/>
    <property type="evidence" value="ECO:0000314"/>
    <property type="project" value="EcoCyc"/>
</dbReference>
<dbReference type="GO" id="GO:0140104">
    <property type="term" value="F:molecular carrier activity"/>
    <property type="evidence" value="ECO:0007669"/>
    <property type="project" value="InterPro"/>
</dbReference>
<dbReference type="GO" id="GO:0043199">
    <property type="term" value="F:sulfate binding"/>
    <property type="evidence" value="ECO:0000314"/>
    <property type="project" value="EcoCyc"/>
</dbReference>
<dbReference type="GO" id="GO:0036173">
    <property type="term" value="F:thiosulfate binding"/>
    <property type="evidence" value="ECO:0000314"/>
    <property type="project" value="EcoCyc"/>
</dbReference>
<dbReference type="GO" id="GO:1902358">
    <property type="term" value="P:sulfate transmembrane transport"/>
    <property type="evidence" value="ECO:0000303"/>
    <property type="project" value="ComplexPortal"/>
</dbReference>
<dbReference type="GO" id="GO:0006790">
    <property type="term" value="P:sulfur compound metabolic process"/>
    <property type="evidence" value="ECO:0000315"/>
    <property type="project" value="EcoCyc"/>
</dbReference>
<dbReference type="GO" id="GO:0015709">
    <property type="term" value="P:thiosulfate transport"/>
    <property type="evidence" value="ECO:0000315"/>
    <property type="project" value="EcoCyc"/>
</dbReference>
<dbReference type="CDD" id="cd01005">
    <property type="entry name" value="PBP2_CysP"/>
    <property type="match status" value="1"/>
</dbReference>
<dbReference type="Gene3D" id="3.40.190.10">
    <property type="entry name" value="Periplasmic binding protein-like II"/>
    <property type="match status" value="2"/>
</dbReference>
<dbReference type="InterPro" id="IPR000957">
    <property type="entry name" value="Sulphate/thiosulphate-bd_CS"/>
</dbReference>
<dbReference type="InterPro" id="IPR034408">
    <property type="entry name" value="Sulphate/thiosulphate_BS"/>
</dbReference>
<dbReference type="InterPro" id="IPR005669">
    <property type="entry name" value="Thiosulph/SO4-bd"/>
</dbReference>
<dbReference type="NCBIfam" id="TIGR00971">
    <property type="entry name" value="3a0106s03"/>
    <property type="match status" value="1"/>
</dbReference>
<dbReference type="NCBIfam" id="NF008022">
    <property type="entry name" value="PRK10752.1"/>
    <property type="match status" value="1"/>
</dbReference>
<dbReference type="NCBIfam" id="NF008106">
    <property type="entry name" value="PRK10852.1"/>
    <property type="match status" value="1"/>
</dbReference>
<dbReference type="PANTHER" id="PTHR30368">
    <property type="entry name" value="SULFATE-BINDING PROTEIN"/>
    <property type="match status" value="1"/>
</dbReference>
<dbReference type="PANTHER" id="PTHR30368:SF1">
    <property type="entry name" value="THIOSULFATE-BINDING PROTEIN"/>
    <property type="match status" value="1"/>
</dbReference>
<dbReference type="Pfam" id="PF13531">
    <property type="entry name" value="SBP_bac_11"/>
    <property type="match status" value="1"/>
</dbReference>
<dbReference type="SUPFAM" id="SSF53850">
    <property type="entry name" value="Periplasmic binding protein-like II"/>
    <property type="match status" value="1"/>
</dbReference>
<dbReference type="PROSITE" id="PS00401">
    <property type="entry name" value="PROK_SULFATE_BIND_1"/>
    <property type="match status" value="1"/>
</dbReference>
<dbReference type="PROSITE" id="PS00757">
    <property type="entry name" value="PROK_SULFATE_BIND_2"/>
    <property type="match status" value="1"/>
</dbReference>
<gene>
    <name type="primary">cysP</name>
    <name type="ordered locus">b2425</name>
    <name type="ordered locus">JW2418</name>
</gene>
<name>CYSP_ECOLI</name>
<feature type="signal peptide" evidence="1">
    <location>
        <begin position="1"/>
        <end position="25"/>
    </location>
</feature>
<feature type="chain" id="PRO_0000031681" description="Thiosulfate-binding protein">
    <location>
        <begin position="26"/>
        <end position="338"/>
    </location>
</feature>
<proteinExistence type="evidence at protein level"/>
<accession>P16700</accession>
<comment type="function">
    <text>Part of the ABC transporter complex CysAWTP (TC 3.A.1.6.1) involved in sulfate/thiosulfate import. This protein specifically binds thiosulfate and is involved in its transmembrane transport.</text>
</comment>
<comment type="subunit">
    <text evidence="2">The complex is composed of two ATP-binding proteins (CysA), two transmembrane proteins (CysT and CysW) and a solute-binding protein (CysP).</text>
</comment>
<comment type="subcellular location">
    <subcellularLocation>
        <location>Periplasm</location>
    </subcellularLocation>
</comment>
<comment type="similarity">
    <text evidence="2">Belongs to the prokaryotic sulfate-binding protein family.</text>
</comment>